<evidence type="ECO:0000255" key="1">
    <source>
        <dbReference type="HAMAP-Rule" id="MF_00227"/>
    </source>
</evidence>
<proteinExistence type="inferred from homology"/>
<feature type="chain" id="PRO_1000194656" description="Ribonuclease P protein component">
    <location>
        <begin position="1"/>
        <end position="128"/>
    </location>
</feature>
<comment type="function">
    <text evidence="1">RNaseP catalyzes the removal of the 5'-leader sequence from pre-tRNA to produce the mature 5'-terminus. It can also cleave other RNA substrates such as 4.5S RNA. The protein component plays an auxiliary but essential role in vivo by binding to the 5'-leader sequence and broadening the substrate specificity of the ribozyme.</text>
</comment>
<comment type="catalytic activity">
    <reaction evidence="1">
        <text>Endonucleolytic cleavage of RNA, removing 5'-extranucleotides from tRNA precursor.</text>
        <dbReference type="EC" id="3.1.26.5"/>
    </reaction>
</comment>
<comment type="subunit">
    <text evidence="1">Consists of a catalytic RNA component (M1 or rnpB) and a protein subunit.</text>
</comment>
<comment type="similarity">
    <text evidence="1">Belongs to the RnpA family.</text>
</comment>
<gene>
    <name evidence="1" type="primary">rnpA</name>
    <name type="ordered locus">A9601_13771</name>
</gene>
<sequence>MAIPKDMRLKGHRTFNYIHKNSMTYHGKLMTFKVARSNPEILLTHKLTNTSNNFRVAIAISKKVSKKAVERNKLRRILQEWLLTNIQKINNHKPYWLLVNLKFGDFRNDKSKLLEEFQNLMFKSRLIK</sequence>
<name>RNPA_PROMS</name>
<keyword id="KW-0255">Endonuclease</keyword>
<keyword id="KW-0378">Hydrolase</keyword>
<keyword id="KW-0540">Nuclease</keyword>
<keyword id="KW-0694">RNA-binding</keyword>
<keyword id="KW-0819">tRNA processing</keyword>
<protein>
    <recommendedName>
        <fullName evidence="1">Ribonuclease P protein component</fullName>
        <shortName evidence="1">RNase P protein</shortName>
        <shortName evidence="1">RNaseP protein</shortName>
        <ecNumber evidence="1">3.1.26.5</ecNumber>
    </recommendedName>
    <alternativeName>
        <fullName evidence="1">Protein C5</fullName>
    </alternativeName>
</protein>
<accession>A2BSA0</accession>
<organism>
    <name type="scientific">Prochlorococcus marinus (strain AS9601)</name>
    <dbReference type="NCBI Taxonomy" id="146891"/>
    <lineage>
        <taxon>Bacteria</taxon>
        <taxon>Bacillati</taxon>
        <taxon>Cyanobacteriota</taxon>
        <taxon>Cyanophyceae</taxon>
        <taxon>Synechococcales</taxon>
        <taxon>Prochlorococcaceae</taxon>
        <taxon>Prochlorococcus</taxon>
    </lineage>
</organism>
<dbReference type="EC" id="3.1.26.5" evidence="1"/>
<dbReference type="EMBL" id="CP000551">
    <property type="protein sequence ID" value="ABM70661.1"/>
    <property type="molecule type" value="Genomic_DNA"/>
</dbReference>
<dbReference type="RefSeq" id="WP_011818798.1">
    <property type="nucleotide sequence ID" value="NC_008816.1"/>
</dbReference>
<dbReference type="SMR" id="A2BSA0"/>
<dbReference type="STRING" id="146891.A9601_13771"/>
<dbReference type="KEGG" id="pmb:A9601_13771"/>
<dbReference type="eggNOG" id="COG0594">
    <property type="taxonomic scope" value="Bacteria"/>
</dbReference>
<dbReference type="HOGENOM" id="CLU_117179_2_0_3"/>
<dbReference type="OrthoDB" id="540358at2"/>
<dbReference type="Proteomes" id="UP000002590">
    <property type="component" value="Chromosome"/>
</dbReference>
<dbReference type="GO" id="GO:0030677">
    <property type="term" value="C:ribonuclease P complex"/>
    <property type="evidence" value="ECO:0007669"/>
    <property type="project" value="TreeGrafter"/>
</dbReference>
<dbReference type="GO" id="GO:0042781">
    <property type="term" value="F:3'-tRNA processing endoribonuclease activity"/>
    <property type="evidence" value="ECO:0007669"/>
    <property type="project" value="TreeGrafter"/>
</dbReference>
<dbReference type="GO" id="GO:0004526">
    <property type="term" value="F:ribonuclease P activity"/>
    <property type="evidence" value="ECO:0007669"/>
    <property type="project" value="UniProtKB-UniRule"/>
</dbReference>
<dbReference type="GO" id="GO:0000049">
    <property type="term" value="F:tRNA binding"/>
    <property type="evidence" value="ECO:0007669"/>
    <property type="project" value="UniProtKB-UniRule"/>
</dbReference>
<dbReference type="GO" id="GO:0001682">
    <property type="term" value="P:tRNA 5'-leader removal"/>
    <property type="evidence" value="ECO:0007669"/>
    <property type="project" value="UniProtKB-UniRule"/>
</dbReference>
<dbReference type="Gene3D" id="3.30.230.10">
    <property type="match status" value="1"/>
</dbReference>
<dbReference type="HAMAP" id="MF_00227">
    <property type="entry name" value="RNase_P"/>
    <property type="match status" value="1"/>
</dbReference>
<dbReference type="InterPro" id="IPR020568">
    <property type="entry name" value="Ribosomal_Su5_D2-typ_SF"/>
</dbReference>
<dbReference type="InterPro" id="IPR014721">
    <property type="entry name" value="Ribsml_uS5_D2-typ_fold_subgr"/>
</dbReference>
<dbReference type="InterPro" id="IPR000100">
    <property type="entry name" value="RNase_P"/>
</dbReference>
<dbReference type="NCBIfam" id="TIGR00188">
    <property type="entry name" value="rnpA"/>
    <property type="match status" value="1"/>
</dbReference>
<dbReference type="PANTHER" id="PTHR33992">
    <property type="entry name" value="RIBONUCLEASE P PROTEIN COMPONENT"/>
    <property type="match status" value="1"/>
</dbReference>
<dbReference type="PANTHER" id="PTHR33992:SF1">
    <property type="entry name" value="RIBONUCLEASE P PROTEIN COMPONENT"/>
    <property type="match status" value="1"/>
</dbReference>
<dbReference type="Pfam" id="PF00825">
    <property type="entry name" value="Ribonuclease_P"/>
    <property type="match status" value="1"/>
</dbReference>
<dbReference type="SUPFAM" id="SSF54211">
    <property type="entry name" value="Ribosomal protein S5 domain 2-like"/>
    <property type="match status" value="1"/>
</dbReference>
<reference key="1">
    <citation type="journal article" date="2007" name="PLoS Genet.">
        <title>Patterns and implications of gene gain and loss in the evolution of Prochlorococcus.</title>
        <authorList>
            <person name="Kettler G.C."/>
            <person name="Martiny A.C."/>
            <person name="Huang K."/>
            <person name="Zucker J."/>
            <person name="Coleman M.L."/>
            <person name="Rodrigue S."/>
            <person name="Chen F."/>
            <person name="Lapidus A."/>
            <person name="Ferriera S."/>
            <person name="Johnson J."/>
            <person name="Steglich C."/>
            <person name="Church G.M."/>
            <person name="Richardson P."/>
            <person name="Chisholm S.W."/>
        </authorList>
    </citation>
    <scope>NUCLEOTIDE SEQUENCE [LARGE SCALE GENOMIC DNA]</scope>
    <source>
        <strain>AS9601</strain>
    </source>
</reference>